<name>S6A11_HUMAN</name>
<evidence type="ECO:0000250" key="1">
    <source>
        <dbReference type="UniProtKB" id="P31647"/>
    </source>
</evidence>
<evidence type="ECO:0000250" key="2">
    <source>
        <dbReference type="UniProtKB" id="P31650"/>
    </source>
</evidence>
<evidence type="ECO:0000255" key="3"/>
<evidence type="ECO:0000256" key="4">
    <source>
        <dbReference type="SAM" id="MobiDB-lite"/>
    </source>
</evidence>
<evidence type="ECO:0000269" key="5">
    <source>
    </source>
</evidence>
<evidence type="ECO:0000303" key="6">
    <source>
    </source>
</evidence>
<evidence type="ECO:0000305" key="7"/>
<evidence type="ECO:0000305" key="8">
    <source>
    </source>
</evidence>
<dbReference type="EMBL" id="S75989">
    <property type="protein sequence ID" value="AAB33570.1"/>
    <property type="molecule type" value="mRNA"/>
</dbReference>
<dbReference type="EMBL" id="AK312719">
    <property type="protein sequence ID" value="BAG35593.1"/>
    <property type="molecule type" value="mRNA"/>
</dbReference>
<dbReference type="EMBL" id="AC018495">
    <property type="status" value="NOT_ANNOTATED_CDS"/>
    <property type="molecule type" value="Genomic_DNA"/>
</dbReference>
<dbReference type="EMBL" id="AC027128">
    <property type="status" value="NOT_ANNOTATED_CDS"/>
    <property type="molecule type" value="Genomic_DNA"/>
</dbReference>
<dbReference type="EMBL" id="CH471055">
    <property type="protein sequence ID" value="EAW64086.1"/>
    <property type="molecule type" value="Genomic_DNA"/>
</dbReference>
<dbReference type="EMBL" id="BC036083">
    <property type="protein sequence ID" value="AAH36083.1"/>
    <property type="molecule type" value="mRNA"/>
</dbReference>
<dbReference type="CCDS" id="CCDS2602.1">
    <molecule id="P48066-1"/>
</dbReference>
<dbReference type="CCDS" id="CCDS82734.1">
    <molecule id="P48066-2"/>
</dbReference>
<dbReference type="RefSeq" id="NP_001304335.1">
    <molecule id="P48066-2"/>
    <property type="nucleotide sequence ID" value="NM_001317406.3"/>
</dbReference>
<dbReference type="RefSeq" id="NP_055044.1">
    <molecule id="P48066-1"/>
    <property type="nucleotide sequence ID" value="NM_014229.3"/>
</dbReference>
<dbReference type="SMR" id="P48066"/>
<dbReference type="FunCoup" id="P48066">
    <property type="interactions" value="401"/>
</dbReference>
<dbReference type="IntAct" id="P48066">
    <property type="interactions" value="2"/>
</dbReference>
<dbReference type="STRING" id="9606.ENSP00000254488"/>
<dbReference type="BindingDB" id="P48066"/>
<dbReference type="ChEMBL" id="CHEMBL5208"/>
<dbReference type="DrugBank" id="DB03107">
    <property type="generic name" value="beta-Alanine"/>
</dbReference>
<dbReference type="DrugBank" id="DB02530">
    <property type="generic name" value="gamma-Aminobutyric acid"/>
</dbReference>
<dbReference type="DrugBank" id="DB08848">
    <property type="generic name" value="Guvacine"/>
</dbReference>
<dbReference type="DrugBank" id="DB08849">
    <property type="generic name" value="Nipecotic acid"/>
</dbReference>
<dbReference type="DrugCentral" id="P48066"/>
<dbReference type="TCDB" id="2.A.22.3.9">
    <property type="family name" value="the neurotransmitter:sodium symporter (nss) family"/>
</dbReference>
<dbReference type="GlyCosmos" id="P48066">
    <property type="glycosylation" value="3 sites, No reported glycans"/>
</dbReference>
<dbReference type="GlyGen" id="P48066">
    <property type="glycosylation" value="3 sites"/>
</dbReference>
<dbReference type="iPTMnet" id="P48066"/>
<dbReference type="PhosphoSitePlus" id="P48066"/>
<dbReference type="SwissPalm" id="P48066"/>
<dbReference type="BioMuta" id="SLC6A11"/>
<dbReference type="DMDM" id="1352531"/>
<dbReference type="jPOST" id="P48066"/>
<dbReference type="MassIVE" id="P48066"/>
<dbReference type="PaxDb" id="9606-ENSP00000254488"/>
<dbReference type="PeptideAtlas" id="P48066"/>
<dbReference type="ProteomicsDB" id="55860">
    <molecule id="P48066-1"/>
</dbReference>
<dbReference type="ProteomicsDB" id="71155"/>
<dbReference type="Antibodypedia" id="26041">
    <property type="antibodies" value="130 antibodies from 25 providers"/>
</dbReference>
<dbReference type="DNASU" id="6538"/>
<dbReference type="Ensembl" id="ENST00000254488.7">
    <molecule id="P48066-1"/>
    <property type="protein sequence ID" value="ENSP00000254488.2"/>
    <property type="gene ID" value="ENSG00000132164.10"/>
</dbReference>
<dbReference type="Ensembl" id="ENST00000454147.1">
    <molecule id="P48066-2"/>
    <property type="protein sequence ID" value="ENSP00000404120.1"/>
    <property type="gene ID" value="ENSG00000132164.10"/>
</dbReference>
<dbReference type="GeneID" id="6538"/>
<dbReference type="KEGG" id="hsa:6538"/>
<dbReference type="MANE-Select" id="ENST00000254488.7">
    <property type="protein sequence ID" value="ENSP00000254488.2"/>
    <property type="RefSeq nucleotide sequence ID" value="NM_014229.3"/>
    <property type="RefSeq protein sequence ID" value="NP_055044.1"/>
</dbReference>
<dbReference type="UCSC" id="uc003bvy.2">
    <molecule id="P48066-1"/>
    <property type="organism name" value="human"/>
</dbReference>
<dbReference type="AGR" id="HGNC:11044"/>
<dbReference type="CTD" id="6538"/>
<dbReference type="DisGeNET" id="6538"/>
<dbReference type="GeneCards" id="SLC6A11"/>
<dbReference type="HGNC" id="HGNC:11044">
    <property type="gene designation" value="SLC6A11"/>
</dbReference>
<dbReference type="HPA" id="ENSG00000132164">
    <property type="expression patterns" value="Tissue enriched (brain)"/>
</dbReference>
<dbReference type="MIM" id="607952">
    <property type="type" value="gene"/>
</dbReference>
<dbReference type="neXtProt" id="NX_P48066"/>
<dbReference type="OpenTargets" id="ENSG00000132164"/>
<dbReference type="PharmGKB" id="PA35907"/>
<dbReference type="VEuPathDB" id="HostDB:ENSG00000132164"/>
<dbReference type="eggNOG" id="KOG3660">
    <property type="taxonomic scope" value="Eukaryota"/>
</dbReference>
<dbReference type="GeneTree" id="ENSGT00940000157569"/>
<dbReference type="HOGENOM" id="CLU_006855_9_5_1"/>
<dbReference type="InParanoid" id="P48066"/>
<dbReference type="OMA" id="KRWKYAG"/>
<dbReference type="OrthoDB" id="6581954at2759"/>
<dbReference type="PAN-GO" id="P48066">
    <property type="GO annotations" value="4 GO annotations based on evolutionary models"/>
</dbReference>
<dbReference type="PhylomeDB" id="P48066"/>
<dbReference type="TreeFam" id="TF343812"/>
<dbReference type="PathwayCommons" id="P48066"/>
<dbReference type="Reactome" id="R-HSA-442660">
    <property type="pathway name" value="Na+/Cl- dependent neurotransmitter transporters"/>
</dbReference>
<dbReference type="Reactome" id="R-HSA-71288">
    <property type="pathway name" value="Creatine metabolism"/>
</dbReference>
<dbReference type="Reactome" id="R-HSA-888593">
    <property type="pathway name" value="Reuptake of GABA"/>
</dbReference>
<dbReference type="SignaLink" id="P48066"/>
<dbReference type="SIGNOR" id="P48066"/>
<dbReference type="BioGRID-ORCS" id="6538">
    <property type="hits" value="9 hits in 1142 CRISPR screens"/>
</dbReference>
<dbReference type="ChiTaRS" id="SLC6A11">
    <property type="organism name" value="human"/>
</dbReference>
<dbReference type="GenomeRNAi" id="6538"/>
<dbReference type="Pharos" id="P48066">
    <property type="development level" value="Tchem"/>
</dbReference>
<dbReference type="PRO" id="PR:P48066"/>
<dbReference type="Proteomes" id="UP000005640">
    <property type="component" value="Chromosome 3"/>
</dbReference>
<dbReference type="RNAct" id="P48066">
    <property type="molecule type" value="protein"/>
</dbReference>
<dbReference type="Bgee" id="ENSG00000132164">
    <property type="expression patterns" value="Expressed in medial globus pallidus and 109 other cell types or tissues"/>
</dbReference>
<dbReference type="GO" id="GO:0042995">
    <property type="term" value="C:cell projection"/>
    <property type="evidence" value="ECO:0000318"/>
    <property type="project" value="GO_Central"/>
</dbReference>
<dbReference type="GO" id="GO:0098982">
    <property type="term" value="C:GABA-ergic synapse"/>
    <property type="evidence" value="ECO:0007669"/>
    <property type="project" value="Ensembl"/>
</dbReference>
<dbReference type="GO" id="GO:0016020">
    <property type="term" value="C:membrane"/>
    <property type="evidence" value="ECO:0000304"/>
    <property type="project" value="ProtInc"/>
</dbReference>
<dbReference type="GO" id="GO:0005886">
    <property type="term" value="C:plasma membrane"/>
    <property type="evidence" value="ECO:0000318"/>
    <property type="project" value="GO_Central"/>
</dbReference>
<dbReference type="GO" id="GO:0045211">
    <property type="term" value="C:postsynaptic membrane"/>
    <property type="evidence" value="ECO:0007669"/>
    <property type="project" value="Ensembl"/>
</dbReference>
<dbReference type="GO" id="GO:0042734">
    <property type="term" value="C:presynaptic membrane"/>
    <property type="evidence" value="ECO:0007669"/>
    <property type="project" value="Ensembl"/>
</dbReference>
<dbReference type="GO" id="GO:0016597">
    <property type="term" value="F:amino acid binding"/>
    <property type="evidence" value="ECO:0007669"/>
    <property type="project" value="Ensembl"/>
</dbReference>
<dbReference type="GO" id="GO:0005332">
    <property type="term" value="F:gamma-aminobutyric acid:sodium:chloride symporter activity"/>
    <property type="evidence" value="ECO:0000314"/>
    <property type="project" value="UniProtKB"/>
</dbReference>
<dbReference type="GO" id="GO:0008028">
    <property type="term" value="F:monocarboxylic acid transmembrane transporter activity"/>
    <property type="evidence" value="ECO:0000314"/>
    <property type="project" value="ARUK-UCL"/>
</dbReference>
<dbReference type="GO" id="GO:0005369">
    <property type="term" value="F:taurine:sodium symporter activity"/>
    <property type="evidence" value="ECO:0007669"/>
    <property type="project" value="Ensembl"/>
</dbReference>
<dbReference type="GO" id="GO:0006865">
    <property type="term" value="P:amino acid transport"/>
    <property type="evidence" value="ECO:0000318"/>
    <property type="project" value="GO_Central"/>
</dbReference>
<dbReference type="GO" id="GO:0051936">
    <property type="term" value="P:gamma-aminobutyric acid reuptake"/>
    <property type="evidence" value="ECO:0000304"/>
    <property type="project" value="Reactome"/>
</dbReference>
<dbReference type="GO" id="GO:0015718">
    <property type="term" value="P:monocarboxylic acid transport"/>
    <property type="evidence" value="ECO:0000314"/>
    <property type="project" value="ARUK-UCL"/>
</dbReference>
<dbReference type="GO" id="GO:0009410">
    <property type="term" value="P:response to xenobiotic stimulus"/>
    <property type="evidence" value="ECO:0007669"/>
    <property type="project" value="Ensembl"/>
</dbReference>
<dbReference type="GO" id="GO:0035725">
    <property type="term" value="P:sodium ion transmembrane transport"/>
    <property type="evidence" value="ECO:0000318"/>
    <property type="project" value="GO_Central"/>
</dbReference>
<dbReference type="CDD" id="cd11508">
    <property type="entry name" value="SLC6sbd_GAT3"/>
    <property type="match status" value="1"/>
</dbReference>
<dbReference type="InterPro" id="IPR000175">
    <property type="entry name" value="Na/ntran_symport"/>
</dbReference>
<dbReference type="InterPro" id="IPR002982">
    <property type="entry name" value="Na/ntran_symport_GABA_GAT3"/>
</dbReference>
<dbReference type="InterPro" id="IPR037272">
    <property type="entry name" value="SNS_sf"/>
</dbReference>
<dbReference type="PANTHER" id="PTHR11616:SF124">
    <property type="entry name" value="SODIUM- AND CHLORIDE-DEPENDENT GABA TRANSPORTER 3"/>
    <property type="match status" value="1"/>
</dbReference>
<dbReference type="PANTHER" id="PTHR11616">
    <property type="entry name" value="SODIUM/CHLORIDE DEPENDENT TRANSPORTER"/>
    <property type="match status" value="1"/>
</dbReference>
<dbReference type="Pfam" id="PF00209">
    <property type="entry name" value="SNF"/>
    <property type="match status" value="1"/>
</dbReference>
<dbReference type="PRINTS" id="PR01197">
    <property type="entry name" value="GAT3TRNSPORT"/>
</dbReference>
<dbReference type="PRINTS" id="PR00176">
    <property type="entry name" value="NANEUSMPORT"/>
</dbReference>
<dbReference type="SUPFAM" id="SSF161070">
    <property type="entry name" value="SNF-like"/>
    <property type="match status" value="1"/>
</dbReference>
<dbReference type="PROSITE" id="PS00610">
    <property type="entry name" value="NA_NEUROTRAN_SYMP_1"/>
    <property type="match status" value="1"/>
</dbReference>
<dbReference type="PROSITE" id="PS00754">
    <property type="entry name" value="NA_NEUROTRAN_SYMP_2"/>
    <property type="match status" value="1"/>
</dbReference>
<dbReference type="PROSITE" id="PS50267">
    <property type="entry name" value="NA_NEUROTRAN_SYMP_3"/>
    <property type="match status" value="1"/>
</dbReference>
<organism>
    <name type="scientific">Homo sapiens</name>
    <name type="common">Human</name>
    <dbReference type="NCBI Taxonomy" id="9606"/>
    <lineage>
        <taxon>Eukaryota</taxon>
        <taxon>Metazoa</taxon>
        <taxon>Chordata</taxon>
        <taxon>Craniata</taxon>
        <taxon>Vertebrata</taxon>
        <taxon>Euteleostomi</taxon>
        <taxon>Mammalia</taxon>
        <taxon>Eutheria</taxon>
        <taxon>Euarchontoglires</taxon>
        <taxon>Primates</taxon>
        <taxon>Haplorrhini</taxon>
        <taxon>Catarrhini</taxon>
        <taxon>Hominidae</taxon>
        <taxon>Homo</taxon>
    </lineage>
</organism>
<comment type="function">
    <text evidence="2 5">Mediates sodium- and chloride-dependent transport of gamma-aminobutyric acid (GABA) (PubMed:7874447). Can also mediate transport of beta-alanine and to a lower extent that of taurine and hypotaurine (By similarity).</text>
</comment>
<comment type="catalytic activity">
    <reaction evidence="5">
        <text>4-aminobutanoate(out) + chloride(out) + 2 Na(+)(out) = 4-aminobutanoate(in) + chloride(in) + 2 Na(+)(in)</text>
        <dbReference type="Rhea" id="RHEA:70687"/>
        <dbReference type="ChEBI" id="CHEBI:17996"/>
        <dbReference type="ChEBI" id="CHEBI:29101"/>
        <dbReference type="ChEBI" id="CHEBI:59888"/>
    </reaction>
    <physiologicalReaction direction="left-to-right" evidence="8">
        <dbReference type="Rhea" id="RHEA:70688"/>
    </physiologicalReaction>
</comment>
<comment type="catalytic activity">
    <reaction evidence="2">
        <text>taurine(out) + chloride(out) + 2 Na(+)(out) = taurine(in) + chloride(in) + 2 Na(+)(in)</text>
        <dbReference type="Rhea" id="RHEA:71223"/>
        <dbReference type="ChEBI" id="CHEBI:17996"/>
        <dbReference type="ChEBI" id="CHEBI:29101"/>
        <dbReference type="ChEBI" id="CHEBI:507393"/>
    </reaction>
    <physiologicalReaction direction="left-to-right" evidence="2">
        <dbReference type="Rhea" id="RHEA:71224"/>
    </physiologicalReaction>
</comment>
<comment type="catalytic activity">
    <reaction evidence="2">
        <text>beta-alanine(out) + chloride(out) + 2 Na(+)(out) = beta-alanine(in) + chloride(in) + 2 Na(+)(in)</text>
        <dbReference type="Rhea" id="RHEA:71247"/>
        <dbReference type="ChEBI" id="CHEBI:17996"/>
        <dbReference type="ChEBI" id="CHEBI:29101"/>
        <dbReference type="ChEBI" id="CHEBI:57966"/>
    </reaction>
    <physiologicalReaction direction="left-to-right" evidence="2">
        <dbReference type="Rhea" id="RHEA:71248"/>
    </physiologicalReaction>
</comment>
<comment type="catalytic activity">
    <reaction evidence="2">
        <text>hypotaurine(out) + chloride(out) + 2 Na(+)(out) = hypotaurine(in) + chloride(in) + 2 Na(+)(in)</text>
        <dbReference type="Rhea" id="RHEA:71243"/>
        <dbReference type="ChEBI" id="CHEBI:17996"/>
        <dbReference type="ChEBI" id="CHEBI:29101"/>
        <dbReference type="ChEBI" id="CHEBI:57853"/>
    </reaction>
    <physiologicalReaction direction="left-to-right" evidence="2">
        <dbReference type="Rhea" id="RHEA:71244"/>
    </physiologicalReaction>
</comment>
<comment type="activity regulation">
    <text evidence="5">GABA transport is inhibited by SNAP-5114.</text>
</comment>
<comment type="subcellular location">
    <subcellularLocation>
        <location evidence="1">Cell membrane</location>
        <topology evidence="3">Multi-pass membrane protein</topology>
    </subcellularLocation>
</comment>
<comment type="alternative products">
    <event type="alternative splicing"/>
    <isoform>
        <id>P48066-1</id>
        <name>1</name>
        <sequence type="displayed"/>
    </isoform>
    <isoform>
        <id>P48066-2</id>
        <name>2</name>
        <sequence type="described" ref="VSP_056539"/>
    </isoform>
</comment>
<comment type="tissue specificity">
    <text evidence="5">Widespread distribution in the brain.</text>
</comment>
<comment type="similarity">
    <text evidence="7">Belongs to the sodium:neurotransmitter symporter (SNF) (TC 2.A.22) family. SLC6A11 subfamily.</text>
</comment>
<gene>
    <name type="primary">SLC6A11</name>
    <name type="synonym">GABT3</name>
    <name type="synonym">GAT3</name>
</gene>
<keyword id="KW-0025">Alternative splicing</keyword>
<keyword id="KW-1003">Cell membrane</keyword>
<keyword id="KW-0325">Glycoprotein</keyword>
<keyword id="KW-0472">Membrane</keyword>
<keyword id="KW-0532">Neurotransmitter transport</keyword>
<keyword id="KW-0597">Phosphoprotein</keyword>
<keyword id="KW-1267">Proteomics identification</keyword>
<keyword id="KW-1185">Reference proteome</keyword>
<keyword id="KW-0769">Symport</keyword>
<keyword id="KW-0812">Transmembrane</keyword>
<keyword id="KW-1133">Transmembrane helix</keyword>
<keyword id="KW-0813">Transport</keyword>
<sequence length="632" mass="70606">MTAEKALPLGNGKAAEEARESEAPGGGCSSGGAAPARHPRVKRDKAVHERGHWNNKVEFVLSVAGEIIGLGNVWRFPYLCYKNGGGAFLIPYVVFFICCGIPVFFLETALGQFTSEGGITCWRKVCPLFEGIGYATQVIEAHLNVYYIIILAWAIFYLSNCFTTELPWATCGHEWNTENCVEFQKLNVSNYSHVSLQNATSPVMEFWEHRVLAISDGIEHIGNLRWELALCLLAAWTICYFCIWKGTKSTGKVVYVTATFPYIMLLILLIRGVTLPGASEGIKFYLYPDLSRLSDPQVWVDAGTQIFFSYAICLGCLTALGSYNNYNNNCYRDCIMLCCLNSGTSFVAGFAIFSVLGFMAYEQGVPIAEVAESGPGLAFIAYPKAVTMMPLSPLWATLFFMMLIFLGLDSQFVCVESLVTAVVDMYPKVFRRGYRRELLILALSVISYFLGLVMLTEGGMYIFQLFDSYAASGMCLLFVAIFECICIGWVYGSNRFYDNIEDMIGYRPPSLIKWCWMIMTPGICAGIFIFFLIKYKPLKYNNIYTYPAWGYGIGWLMALSSMLCIPLWICITVWKTEGTLPEKLQKLTTPSTDLKMRGKLGVSPRMVTVNDCDAKLKSDGTIAAITEKETHF</sequence>
<reference key="1">
    <citation type="journal article" date="1994" name="Recept. Channels">
        <title>Cloning of the human homologue of the GABA transporter GAT-3 and identification of a novel inhibitor with selectivity for this site.</title>
        <authorList>
            <person name="Borden L.A."/>
            <person name="Murali Dhar T.G."/>
            <person name="Smith K.E."/>
            <person name="Branchek T.A."/>
            <person name="Gluchowski C."/>
            <person name="Weinshank R.L."/>
        </authorList>
    </citation>
    <scope>NUCLEOTIDE SEQUENCE [MRNA] (ISOFORM 1)</scope>
    <scope>FUNCTION</scope>
    <scope>TRANSPORTER ACTIVITY</scope>
    <scope>ACTIVITY REGULATION</scope>
    <scope>TISSUE SPECIFICITY</scope>
    <source>
        <tissue>Fetal brain</tissue>
    </source>
</reference>
<reference key="2">
    <citation type="journal article" date="2004" name="Nat. Genet.">
        <title>Complete sequencing and characterization of 21,243 full-length human cDNAs.</title>
        <authorList>
            <person name="Ota T."/>
            <person name="Suzuki Y."/>
            <person name="Nishikawa T."/>
            <person name="Otsuki T."/>
            <person name="Sugiyama T."/>
            <person name="Irie R."/>
            <person name="Wakamatsu A."/>
            <person name="Hayashi K."/>
            <person name="Sato H."/>
            <person name="Nagai K."/>
            <person name="Kimura K."/>
            <person name="Makita H."/>
            <person name="Sekine M."/>
            <person name="Obayashi M."/>
            <person name="Nishi T."/>
            <person name="Shibahara T."/>
            <person name="Tanaka T."/>
            <person name="Ishii S."/>
            <person name="Yamamoto J."/>
            <person name="Saito K."/>
            <person name="Kawai Y."/>
            <person name="Isono Y."/>
            <person name="Nakamura Y."/>
            <person name="Nagahari K."/>
            <person name="Murakami K."/>
            <person name="Yasuda T."/>
            <person name="Iwayanagi T."/>
            <person name="Wagatsuma M."/>
            <person name="Shiratori A."/>
            <person name="Sudo H."/>
            <person name="Hosoiri T."/>
            <person name="Kaku Y."/>
            <person name="Kodaira H."/>
            <person name="Kondo H."/>
            <person name="Sugawara M."/>
            <person name="Takahashi M."/>
            <person name="Kanda K."/>
            <person name="Yokoi T."/>
            <person name="Furuya T."/>
            <person name="Kikkawa E."/>
            <person name="Omura Y."/>
            <person name="Abe K."/>
            <person name="Kamihara K."/>
            <person name="Katsuta N."/>
            <person name="Sato K."/>
            <person name="Tanikawa M."/>
            <person name="Yamazaki M."/>
            <person name="Ninomiya K."/>
            <person name="Ishibashi T."/>
            <person name="Yamashita H."/>
            <person name="Murakawa K."/>
            <person name="Fujimori K."/>
            <person name="Tanai H."/>
            <person name="Kimata M."/>
            <person name="Watanabe M."/>
            <person name="Hiraoka S."/>
            <person name="Chiba Y."/>
            <person name="Ishida S."/>
            <person name="Ono Y."/>
            <person name="Takiguchi S."/>
            <person name="Watanabe S."/>
            <person name="Yosida M."/>
            <person name="Hotuta T."/>
            <person name="Kusano J."/>
            <person name="Kanehori K."/>
            <person name="Takahashi-Fujii A."/>
            <person name="Hara H."/>
            <person name="Tanase T.-O."/>
            <person name="Nomura Y."/>
            <person name="Togiya S."/>
            <person name="Komai F."/>
            <person name="Hara R."/>
            <person name="Takeuchi K."/>
            <person name="Arita M."/>
            <person name="Imose N."/>
            <person name="Musashino K."/>
            <person name="Yuuki H."/>
            <person name="Oshima A."/>
            <person name="Sasaki N."/>
            <person name="Aotsuka S."/>
            <person name="Yoshikawa Y."/>
            <person name="Matsunawa H."/>
            <person name="Ichihara T."/>
            <person name="Shiohata N."/>
            <person name="Sano S."/>
            <person name="Moriya S."/>
            <person name="Momiyama H."/>
            <person name="Satoh N."/>
            <person name="Takami S."/>
            <person name="Terashima Y."/>
            <person name="Suzuki O."/>
            <person name="Nakagawa S."/>
            <person name="Senoh A."/>
            <person name="Mizoguchi H."/>
            <person name="Goto Y."/>
            <person name="Shimizu F."/>
            <person name="Wakebe H."/>
            <person name="Hishigaki H."/>
            <person name="Watanabe T."/>
            <person name="Sugiyama A."/>
            <person name="Takemoto M."/>
            <person name="Kawakami B."/>
            <person name="Yamazaki M."/>
            <person name="Watanabe K."/>
            <person name="Kumagai A."/>
            <person name="Itakura S."/>
            <person name="Fukuzumi Y."/>
            <person name="Fujimori Y."/>
            <person name="Komiyama M."/>
            <person name="Tashiro H."/>
            <person name="Tanigami A."/>
            <person name="Fujiwara T."/>
            <person name="Ono T."/>
            <person name="Yamada K."/>
            <person name="Fujii Y."/>
            <person name="Ozaki K."/>
            <person name="Hirao M."/>
            <person name="Ohmori Y."/>
            <person name="Kawabata A."/>
            <person name="Hikiji T."/>
            <person name="Kobatake N."/>
            <person name="Inagaki H."/>
            <person name="Ikema Y."/>
            <person name="Okamoto S."/>
            <person name="Okitani R."/>
            <person name="Kawakami T."/>
            <person name="Noguchi S."/>
            <person name="Itoh T."/>
            <person name="Shigeta K."/>
            <person name="Senba T."/>
            <person name="Matsumura K."/>
            <person name="Nakajima Y."/>
            <person name="Mizuno T."/>
            <person name="Morinaga M."/>
            <person name="Sasaki M."/>
            <person name="Togashi T."/>
            <person name="Oyama M."/>
            <person name="Hata H."/>
            <person name="Watanabe M."/>
            <person name="Komatsu T."/>
            <person name="Mizushima-Sugano J."/>
            <person name="Satoh T."/>
            <person name="Shirai Y."/>
            <person name="Takahashi Y."/>
            <person name="Nakagawa K."/>
            <person name="Okumura K."/>
            <person name="Nagase T."/>
            <person name="Nomura N."/>
            <person name="Kikuchi H."/>
            <person name="Masuho Y."/>
            <person name="Yamashita R."/>
            <person name="Nakai K."/>
            <person name="Yada T."/>
            <person name="Nakamura Y."/>
            <person name="Ohara O."/>
            <person name="Isogai T."/>
            <person name="Sugano S."/>
        </authorList>
    </citation>
    <scope>NUCLEOTIDE SEQUENCE [LARGE SCALE MRNA] (ISOFORM 1)</scope>
    <source>
        <tissue>Brain</tissue>
    </source>
</reference>
<reference key="3">
    <citation type="journal article" date="2006" name="Nature">
        <title>The DNA sequence, annotation and analysis of human chromosome 3.</title>
        <authorList>
            <person name="Muzny D.M."/>
            <person name="Scherer S.E."/>
            <person name="Kaul R."/>
            <person name="Wang J."/>
            <person name="Yu J."/>
            <person name="Sudbrak R."/>
            <person name="Buhay C.J."/>
            <person name="Chen R."/>
            <person name="Cree A."/>
            <person name="Ding Y."/>
            <person name="Dugan-Rocha S."/>
            <person name="Gill R."/>
            <person name="Gunaratne P."/>
            <person name="Harris R.A."/>
            <person name="Hawes A.C."/>
            <person name="Hernandez J."/>
            <person name="Hodgson A.V."/>
            <person name="Hume J."/>
            <person name="Jackson A."/>
            <person name="Khan Z.M."/>
            <person name="Kovar-Smith C."/>
            <person name="Lewis L.R."/>
            <person name="Lozado R.J."/>
            <person name="Metzker M.L."/>
            <person name="Milosavljevic A."/>
            <person name="Miner G.R."/>
            <person name="Morgan M.B."/>
            <person name="Nazareth L.V."/>
            <person name="Scott G."/>
            <person name="Sodergren E."/>
            <person name="Song X.-Z."/>
            <person name="Steffen D."/>
            <person name="Wei S."/>
            <person name="Wheeler D.A."/>
            <person name="Wright M.W."/>
            <person name="Worley K.C."/>
            <person name="Yuan Y."/>
            <person name="Zhang Z."/>
            <person name="Adams C.Q."/>
            <person name="Ansari-Lari M.A."/>
            <person name="Ayele M."/>
            <person name="Brown M.J."/>
            <person name="Chen G."/>
            <person name="Chen Z."/>
            <person name="Clendenning J."/>
            <person name="Clerc-Blankenburg K.P."/>
            <person name="Chen R."/>
            <person name="Chen Z."/>
            <person name="Davis C."/>
            <person name="Delgado O."/>
            <person name="Dinh H.H."/>
            <person name="Dong W."/>
            <person name="Draper H."/>
            <person name="Ernst S."/>
            <person name="Fu G."/>
            <person name="Gonzalez-Garay M.L."/>
            <person name="Garcia D.K."/>
            <person name="Gillett W."/>
            <person name="Gu J."/>
            <person name="Hao B."/>
            <person name="Haugen E."/>
            <person name="Havlak P."/>
            <person name="He X."/>
            <person name="Hennig S."/>
            <person name="Hu S."/>
            <person name="Huang W."/>
            <person name="Jackson L.R."/>
            <person name="Jacob L.S."/>
            <person name="Kelly S.H."/>
            <person name="Kube M."/>
            <person name="Levy R."/>
            <person name="Li Z."/>
            <person name="Liu B."/>
            <person name="Liu J."/>
            <person name="Liu W."/>
            <person name="Lu J."/>
            <person name="Maheshwari M."/>
            <person name="Nguyen B.-V."/>
            <person name="Okwuonu G.O."/>
            <person name="Palmeiri A."/>
            <person name="Pasternak S."/>
            <person name="Perez L.M."/>
            <person name="Phelps K.A."/>
            <person name="Plopper F.J."/>
            <person name="Qiang B."/>
            <person name="Raymond C."/>
            <person name="Rodriguez R."/>
            <person name="Saenphimmachak C."/>
            <person name="Santibanez J."/>
            <person name="Shen H."/>
            <person name="Shen Y."/>
            <person name="Subramanian S."/>
            <person name="Tabor P.E."/>
            <person name="Verduzco D."/>
            <person name="Waldron L."/>
            <person name="Wang J."/>
            <person name="Wang J."/>
            <person name="Wang Q."/>
            <person name="Williams G.A."/>
            <person name="Wong G.K.-S."/>
            <person name="Yao Z."/>
            <person name="Zhang J."/>
            <person name="Zhang X."/>
            <person name="Zhao G."/>
            <person name="Zhou J."/>
            <person name="Zhou Y."/>
            <person name="Nelson D."/>
            <person name="Lehrach H."/>
            <person name="Reinhardt R."/>
            <person name="Naylor S.L."/>
            <person name="Yang H."/>
            <person name="Olson M."/>
            <person name="Weinstock G."/>
            <person name="Gibbs R.A."/>
        </authorList>
    </citation>
    <scope>NUCLEOTIDE SEQUENCE [LARGE SCALE GENOMIC DNA]</scope>
</reference>
<reference key="4">
    <citation type="submission" date="2005-09" db="EMBL/GenBank/DDBJ databases">
        <authorList>
            <person name="Mural R.J."/>
            <person name="Istrail S."/>
            <person name="Sutton G."/>
            <person name="Florea L."/>
            <person name="Halpern A.L."/>
            <person name="Mobarry C.M."/>
            <person name="Lippert R."/>
            <person name="Walenz B."/>
            <person name="Shatkay H."/>
            <person name="Dew I."/>
            <person name="Miller J.R."/>
            <person name="Flanigan M.J."/>
            <person name="Edwards N.J."/>
            <person name="Bolanos R."/>
            <person name="Fasulo D."/>
            <person name="Halldorsson B.V."/>
            <person name="Hannenhalli S."/>
            <person name="Turner R."/>
            <person name="Yooseph S."/>
            <person name="Lu F."/>
            <person name="Nusskern D.R."/>
            <person name="Shue B.C."/>
            <person name="Zheng X.H."/>
            <person name="Zhong F."/>
            <person name="Delcher A.L."/>
            <person name="Huson D.H."/>
            <person name="Kravitz S.A."/>
            <person name="Mouchard L."/>
            <person name="Reinert K."/>
            <person name="Remington K.A."/>
            <person name="Clark A.G."/>
            <person name="Waterman M.S."/>
            <person name="Eichler E.E."/>
            <person name="Adams M.D."/>
            <person name="Hunkapiller M.W."/>
            <person name="Myers E.W."/>
            <person name="Venter J.C."/>
        </authorList>
    </citation>
    <scope>NUCLEOTIDE SEQUENCE [LARGE SCALE GENOMIC DNA]</scope>
</reference>
<reference key="5">
    <citation type="journal article" date="2004" name="Genome Res.">
        <title>The status, quality, and expansion of the NIH full-length cDNA project: the Mammalian Gene Collection (MGC).</title>
        <authorList>
            <consortium name="The MGC Project Team"/>
        </authorList>
    </citation>
    <scope>NUCLEOTIDE SEQUENCE [LARGE SCALE MRNA] (ISOFORM 2)</scope>
    <source>
        <tissue>Brain</tissue>
    </source>
</reference>
<feature type="chain" id="PRO_0000214784" description="Sodium- and chloride-dependent GABA transporter 3">
    <location>
        <begin position="1"/>
        <end position="632"/>
    </location>
</feature>
<feature type="topological domain" description="Cytoplasmic" evidence="3">
    <location>
        <begin position="1"/>
        <end position="58"/>
    </location>
</feature>
<feature type="transmembrane region" description="Helical; Name=1" evidence="3">
    <location>
        <begin position="59"/>
        <end position="79"/>
    </location>
</feature>
<feature type="transmembrane region" description="Helical; Name=2" evidence="3">
    <location>
        <begin position="87"/>
        <end position="106"/>
    </location>
</feature>
<feature type="transmembrane region" description="Helical; Name=3" evidence="3">
    <location>
        <begin position="131"/>
        <end position="151"/>
    </location>
</feature>
<feature type="topological domain" description="Extracellular" evidence="3">
    <location>
        <begin position="152"/>
        <end position="225"/>
    </location>
</feature>
<feature type="transmembrane region" description="Helical; Name=4" evidence="3">
    <location>
        <begin position="226"/>
        <end position="244"/>
    </location>
</feature>
<feature type="transmembrane region" description="Helical; Name=5" evidence="3">
    <location>
        <begin position="253"/>
        <end position="270"/>
    </location>
</feature>
<feature type="transmembrane region" description="Helical; Name=6" evidence="3">
    <location>
        <begin position="306"/>
        <end position="323"/>
    </location>
</feature>
<feature type="transmembrane region" description="Helical; Name=7" evidence="3">
    <location>
        <begin position="335"/>
        <end position="356"/>
    </location>
</feature>
<feature type="transmembrane region" description="Helical; Name=8" evidence="3">
    <location>
        <begin position="389"/>
        <end position="408"/>
    </location>
</feature>
<feature type="transmembrane region" description="Helical; Name=9" evidence="3">
    <location>
        <begin position="438"/>
        <end position="456"/>
    </location>
</feature>
<feature type="transmembrane region" description="Helical; Name=10" evidence="3">
    <location>
        <begin position="473"/>
        <end position="493"/>
    </location>
</feature>
<feature type="transmembrane region" description="Helical; Name=11" evidence="3">
    <location>
        <begin position="514"/>
        <end position="533"/>
    </location>
</feature>
<feature type="transmembrane region" description="Helical; Name=12" evidence="3">
    <location>
        <begin position="553"/>
        <end position="571"/>
    </location>
</feature>
<feature type="topological domain" description="Cytoplasmic" evidence="3">
    <location>
        <begin position="572"/>
        <end position="632"/>
    </location>
</feature>
<feature type="region of interest" description="Disordered" evidence="4">
    <location>
        <begin position="1"/>
        <end position="41"/>
    </location>
</feature>
<feature type="modified residue" description="Phosphoserine" evidence="1">
    <location>
        <position position="21"/>
    </location>
</feature>
<feature type="glycosylation site" description="N-linked (GlcNAc...) asparagine" evidence="3">
    <location>
        <position position="187"/>
    </location>
</feature>
<feature type="glycosylation site" description="N-linked (GlcNAc...) asparagine" evidence="3">
    <location>
        <position position="190"/>
    </location>
</feature>
<feature type="glycosylation site" description="N-linked (GlcNAc...) asparagine" evidence="3">
    <location>
        <position position="198"/>
    </location>
</feature>
<feature type="splice variant" id="VSP_056539" description="In isoform 2." evidence="6">
    <location>
        <begin position="209"/>
        <end position="632"/>
    </location>
</feature>
<feature type="sequence conflict" description="In Ref. 2; BAG35593." evidence="7" ref="2">
    <original>F</original>
    <variation>L</variation>
    <location>
        <position position="284"/>
    </location>
</feature>
<protein>
    <recommendedName>
        <fullName>Sodium- and chloride-dependent GABA transporter 3</fullName>
        <shortName>GAT-3</shortName>
    </recommendedName>
    <alternativeName>
        <fullName>Solute carrier family 6 member 11</fullName>
    </alternativeName>
</protein>
<accession>P48066</accession>
<accession>B2R6U6</accession>
<accession>Q8IYC9</accession>
<proteinExistence type="evidence at protein level"/>